<proteinExistence type="inferred from homology"/>
<evidence type="ECO:0000255" key="1">
    <source>
        <dbReference type="HAMAP-Rule" id="MF_00382"/>
    </source>
</evidence>
<evidence type="ECO:0000305" key="2"/>
<sequence length="117" mass="14205">MTRTRRGYIARRRRTKIRLFTSSFRGAHSRLTRTITQQKIRALVSTHRDRDRQKRDFRRLWITRINAVIHENGASYSYSRFIHDLYKRQLLLNRKILAQIAISNRNCLYMISNEIIK</sequence>
<reference key="1">
    <citation type="journal article" date="2006" name="BMC Evol. Biol.">
        <title>Phylogenetic analyses of Vitis (Vitaceae) based on complete chloroplast genome sequences: effects of taxon sampling and phylogenetic methods on resolving relationships among rosids.</title>
        <authorList>
            <person name="Jansen R.K."/>
            <person name="Kaittanis C."/>
            <person name="Lee S.-B."/>
            <person name="Saski C."/>
            <person name="Tomkins J."/>
            <person name="Alverson A.J."/>
            <person name="Daniell H."/>
        </authorList>
    </citation>
    <scope>NUCLEOTIDE SEQUENCE [LARGE SCALE GENOMIC DNA]</scope>
    <source>
        <strain>cv. Maxxa</strain>
    </source>
</reference>
<feature type="chain" id="PRO_0000276432" description="Large ribosomal subunit protein bL20c">
    <location>
        <begin position="1"/>
        <end position="117"/>
    </location>
</feature>
<organism>
    <name type="scientific">Vitis vinifera</name>
    <name type="common">Grape</name>
    <dbReference type="NCBI Taxonomy" id="29760"/>
    <lineage>
        <taxon>Eukaryota</taxon>
        <taxon>Viridiplantae</taxon>
        <taxon>Streptophyta</taxon>
        <taxon>Embryophyta</taxon>
        <taxon>Tracheophyta</taxon>
        <taxon>Spermatophyta</taxon>
        <taxon>Magnoliopsida</taxon>
        <taxon>eudicotyledons</taxon>
        <taxon>Gunneridae</taxon>
        <taxon>Pentapetalae</taxon>
        <taxon>rosids</taxon>
        <taxon>Vitales</taxon>
        <taxon>Vitaceae</taxon>
        <taxon>Viteae</taxon>
        <taxon>Vitis</taxon>
    </lineage>
</organism>
<keyword id="KW-0150">Chloroplast</keyword>
<keyword id="KW-0934">Plastid</keyword>
<keyword id="KW-1185">Reference proteome</keyword>
<keyword id="KW-0687">Ribonucleoprotein</keyword>
<keyword id="KW-0689">Ribosomal protein</keyword>
<keyword id="KW-0694">RNA-binding</keyword>
<keyword id="KW-0699">rRNA-binding</keyword>
<accession>Q0ZIZ7</accession>
<protein>
    <recommendedName>
        <fullName evidence="1">Large ribosomal subunit protein bL20c</fullName>
    </recommendedName>
    <alternativeName>
        <fullName evidence="2">50S ribosomal protein L20, chloroplastic</fullName>
    </alternativeName>
</protein>
<name>RK20_VITVI</name>
<dbReference type="EMBL" id="DQ424856">
    <property type="protein sequence ID" value="ABE47557.1"/>
    <property type="molecule type" value="Genomic_DNA"/>
</dbReference>
<dbReference type="RefSeq" id="YP_567099.1">
    <property type="nucleotide sequence ID" value="NC_007957.1"/>
</dbReference>
<dbReference type="SMR" id="Q0ZIZ7"/>
<dbReference type="FunCoup" id="Q0ZIZ7">
    <property type="interactions" value="53"/>
</dbReference>
<dbReference type="STRING" id="29760.Q0ZIZ7"/>
<dbReference type="GeneID" id="4025123"/>
<dbReference type="KEGG" id="vvi:4025123"/>
<dbReference type="InParanoid" id="Q0ZIZ7"/>
<dbReference type="OrthoDB" id="190443at71240"/>
<dbReference type="Proteomes" id="UP000009183">
    <property type="component" value="Chloroplast"/>
</dbReference>
<dbReference type="GO" id="GO:0009507">
    <property type="term" value="C:chloroplast"/>
    <property type="evidence" value="ECO:0007669"/>
    <property type="project" value="UniProtKB-SubCell"/>
</dbReference>
<dbReference type="GO" id="GO:1990904">
    <property type="term" value="C:ribonucleoprotein complex"/>
    <property type="evidence" value="ECO:0007669"/>
    <property type="project" value="UniProtKB-KW"/>
</dbReference>
<dbReference type="GO" id="GO:0005840">
    <property type="term" value="C:ribosome"/>
    <property type="evidence" value="ECO:0007669"/>
    <property type="project" value="UniProtKB-KW"/>
</dbReference>
<dbReference type="GO" id="GO:0019843">
    <property type="term" value="F:rRNA binding"/>
    <property type="evidence" value="ECO:0007669"/>
    <property type="project" value="UniProtKB-UniRule"/>
</dbReference>
<dbReference type="GO" id="GO:0003735">
    <property type="term" value="F:structural constituent of ribosome"/>
    <property type="evidence" value="ECO:0000318"/>
    <property type="project" value="GO_Central"/>
</dbReference>
<dbReference type="GO" id="GO:0000027">
    <property type="term" value="P:ribosomal large subunit assembly"/>
    <property type="evidence" value="ECO:0007669"/>
    <property type="project" value="UniProtKB-UniRule"/>
</dbReference>
<dbReference type="GO" id="GO:0006412">
    <property type="term" value="P:translation"/>
    <property type="evidence" value="ECO:0007669"/>
    <property type="project" value="InterPro"/>
</dbReference>
<dbReference type="CDD" id="cd07026">
    <property type="entry name" value="Ribosomal_L20"/>
    <property type="match status" value="1"/>
</dbReference>
<dbReference type="FunFam" id="1.10.1900.20:FF:000001">
    <property type="entry name" value="50S ribosomal protein L20"/>
    <property type="match status" value="1"/>
</dbReference>
<dbReference type="Gene3D" id="6.10.160.10">
    <property type="match status" value="1"/>
</dbReference>
<dbReference type="Gene3D" id="1.10.1900.20">
    <property type="entry name" value="Ribosomal protein L20"/>
    <property type="match status" value="1"/>
</dbReference>
<dbReference type="HAMAP" id="MF_00382">
    <property type="entry name" value="Ribosomal_bL20"/>
    <property type="match status" value="1"/>
</dbReference>
<dbReference type="InterPro" id="IPR005813">
    <property type="entry name" value="Ribosomal_bL20"/>
</dbReference>
<dbReference type="InterPro" id="IPR049946">
    <property type="entry name" value="RIBOSOMAL_L20_CS"/>
</dbReference>
<dbReference type="InterPro" id="IPR035566">
    <property type="entry name" value="Ribosomal_protein_bL20_C"/>
</dbReference>
<dbReference type="NCBIfam" id="TIGR01032">
    <property type="entry name" value="rplT_bact"/>
    <property type="match status" value="1"/>
</dbReference>
<dbReference type="PANTHER" id="PTHR10986">
    <property type="entry name" value="39S RIBOSOMAL PROTEIN L20"/>
    <property type="match status" value="1"/>
</dbReference>
<dbReference type="Pfam" id="PF00453">
    <property type="entry name" value="Ribosomal_L20"/>
    <property type="match status" value="1"/>
</dbReference>
<dbReference type="PRINTS" id="PR00062">
    <property type="entry name" value="RIBOSOMALL20"/>
</dbReference>
<dbReference type="SUPFAM" id="SSF74731">
    <property type="entry name" value="Ribosomal protein L20"/>
    <property type="match status" value="1"/>
</dbReference>
<dbReference type="PROSITE" id="PS00937">
    <property type="entry name" value="RIBOSOMAL_L20"/>
    <property type="match status" value="1"/>
</dbReference>
<geneLocation type="chloroplast"/>
<gene>
    <name evidence="1" type="primary">rpl20</name>
</gene>
<comment type="function">
    <text evidence="1">Binds directly to 23S ribosomal RNA and is necessary for the in vitro assembly process of the 50S ribosomal subunit. It is not involved in the protein synthesizing functions of that subunit.</text>
</comment>
<comment type="subcellular location">
    <subcellularLocation>
        <location>Plastid</location>
        <location>Chloroplast</location>
    </subcellularLocation>
</comment>
<comment type="similarity">
    <text evidence="1">Belongs to the bacterial ribosomal protein bL20 family.</text>
</comment>